<dbReference type="EMBL" id="AE006468">
    <property type="protein sequence ID" value="AAL20404.1"/>
    <property type="status" value="ALT_INIT"/>
    <property type="molecule type" value="Genomic_DNA"/>
</dbReference>
<dbReference type="RefSeq" id="NP_460445.3">
    <property type="nucleotide sequence ID" value="NC_003197.2"/>
</dbReference>
<dbReference type="RefSeq" id="WP_000523907.1">
    <property type="nucleotide sequence ID" value="NC_003197.2"/>
</dbReference>
<dbReference type="STRING" id="99287.STM1485"/>
<dbReference type="PaxDb" id="99287-STM1485"/>
<dbReference type="GeneID" id="1253003"/>
<dbReference type="KEGG" id="stm:STM1485"/>
<dbReference type="PATRIC" id="fig|99287.12.peg.1570"/>
<dbReference type="HOGENOM" id="CLU_102486_2_1_6"/>
<dbReference type="OMA" id="HVKKHHA"/>
<dbReference type="Proteomes" id="UP000001014">
    <property type="component" value="Chromosome"/>
</dbReference>
<dbReference type="GO" id="GO:0042597">
    <property type="term" value="C:periplasmic space"/>
    <property type="evidence" value="ECO:0007669"/>
    <property type="project" value="UniProtKB-SubCell"/>
</dbReference>
<dbReference type="HAMAP" id="MF_00546">
    <property type="entry name" value="Asr"/>
    <property type="match status" value="1"/>
</dbReference>
<dbReference type="InterPro" id="IPR023497">
    <property type="entry name" value="Acid_shock"/>
</dbReference>
<dbReference type="NCBIfam" id="NF033636">
    <property type="entry name" value="acid_shock_Asr"/>
    <property type="match status" value="1"/>
</dbReference>
<dbReference type="Pfam" id="PF06392">
    <property type="entry name" value="Asr"/>
    <property type="match status" value="1"/>
</dbReference>
<protein>
    <recommendedName>
        <fullName>Acid shock protein</fullName>
    </recommendedName>
</protein>
<keyword id="KW-0574">Periplasm</keyword>
<keyword id="KW-1185">Reference proteome</keyword>
<keyword id="KW-0732">Signal</keyword>
<feature type="signal peptide" evidence="1">
    <location>
        <begin position="1"/>
        <end position="21"/>
    </location>
</feature>
<feature type="propeptide" id="PRO_0000269509" evidence="1">
    <location>
        <begin position="22"/>
        <end position="56"/>
    </location>
</feature>
<feature type="chain" id="PRO_0000002408" description="Acid shock protein">
    <location>
        <begin position="57"/>
        <end position="82"/>
    </location>
</feature>
<feature type="region of interest" description="Disordered" evidence="2">
    <location>
        <begin position="22"/>
        <end position="82"/>
    </location>
</feature>
<feature type="compositionally biased region" description="Low complexity" evidence="2">
    <location>
        <begin position="22"/>
        <end position="40"/>
    </location>
</feature>
<feature type="compositionally biased region" description="Basic residues" evidence="2">
    <location>
        <begin position="57"/>
        <end position="66"/>
    </location>
</feature>
<feature type="compositionally biased region" description="Low complexity" evidence="2">
    <location>
        <begin position="67"/>
        <end position="82"/>
    </location>
</feature>
<name>ASR_SALTY</name>
<proteinExistence type="inferred from homology"/>
<organism>
    <name type="scientific">Salmonella typhimurium (strain LT2 / SGSC1412 / ATCC 700720)</name>
    <dbReference type="NCBI Taxonomy" id="99287"/>
    <lineage>
        <taxon>Bacteria</taxon>
        <taxon>Pseudomonadati</taxon>
        <taxon>Pseudomonadota</taxon>
        <taxon>Gammaproteobacteria</taxon>
        <taxon>Enterobacterales</taxon>
        <taxon>Enterobacteriaceae</taxon>
        <taxon>Salmonella</taxon>
    </lineage>
</organism>
<evidence type="ECO:0000250" key="1"/>
<evidence type="ECO:0000256" key="2">
    <source>
        <dbReference type="SAM" id="MobiDB-lite"/>
    </source>
</evidence>
<evidence type="ECO:0000305" key="3"/>
<sequence>MKKVLALVVAAAMGLSSAAFAAETATPAKTAAPAKTTQTTQHHKKQHKKTVEQKAQAAKKHQKKGGKAPAKTTSKPTTQPAA</sequence>
<reference key="1">
    <citation type="journal article" date="2001" name="Nature">
        <title>Complete genome sequence of Salmonella enterica serovar Typhimurium LT2.</title>
        <authorList>
            <person name="McClelland M."/>
            <person name="Sanderson K.E."/>
            <person name="Spieth J."/>
            <person name="Clifton S.W."/>
            <person name="Latreille P."/>
            <person name="Courtney L."/>
            <person name="Porwollik S."/>
            <person name="Ali J."/>
            <person name="Dante M."/>
            <person name="Du F."/>
            <person name="Hou S."/>
            <person name="Layman D."/>
            <person name="Leonard S."/>
            <person name="Nguyen C."/>
            <person name="Scott K."/>
            <person name="Holmes A."/>
            <person name="Grewal N."/>
            <person name="Mulvaney E."/>
            <person name="Ryan E."/>
            <person name="Sun H."/>
            <person name="Florea L."/>
            <person name="Miller W."/>
            <person name="Stoneking T."/>
            <person name="Nhan M."/>
            <person name="Waterston R."/>
            <person name="Wilson R.K."/>
        </authorList>
    </citation>
    <scope>NUCLEOTIDE SEQUENCE [LARGE SCALE GENOMIC DNA]</scope>
    <source>
        <strain>LT2 / SGSC1412 / ATCC 700720</strain>
    </source>
</reference>
<accession>Q8ZPK9</accession>
<gene>
    <name type="primary">asr</name>
    <name type="ordered locus">STM1485</name>
</gene>
<comment type="function">
    <text evidence="1">Required for growth and/or survival at acidic conditions.</text>
</comment>
<comment type="subcellular location">
    <subcellularLocation>
        <location evidence="1">Periplasm</location>
    </subcellularLocation>
</comment>
<comment type="PTM">
    <text evidence="1">Proteolytic processing gives rise to the active protein.</text>
</comment>
<comment type="similarity">
    <text evidence="3">Belongs to the Asr family.</text>
</comment>
<comment type="sequence caution" evidence="3">
    <conflict type="erroneous initiation">
        <sequence resource="EMBL-CDS" id="AAL20404"/>
    </conflict>
</comment>